<name>ATPB_AGAAF</name>
<keyword id="KW-0066">ATP synthesis</keyword>
<keyword id="KW-0067">ATP-binding</keyword>
<keyword id="KW-0139">CF(1)</keyword>
<keyword id="KW-0150">Chloroplast</keyword>
<keyword id="KW-0375">Hydrogen ion transport</keyword>
<keyword id="KW-0406">Ion transport</keyword>
<keyword id="KW-0472">Membrane</keyword>
<keyword id="KW-0547">Nucleotide-binding</keyword>
<keyword id="KW-0934">Plastid</keyword>
<keyword id="KW-0793">Thylakoid</keyword>
<keyword id="KW-1278">Translocase</keyword>
<keyword id="KW-0813">Transport</keyword>
<proteinExistence type="inferred from homology"/>
<accession>Q95DR6</accession>
<dbReference type="EC" id="7.1.2.2" evidence="1"/>
<dbReference type="EMBL" id="AJ417568">
    <property type="protein sequence ID" value="CAD10751.1"/>
    <property type="molecule type" value="Genomic_DNA"/>
</dbReference>
<dbReference type="SMR" id="Q95DR6"/>
<dbReference type="GO" id="GO:0009535">
    <property type="term" value="C:chloroplast thylakoid membrane"/>
    <property type="evidence" value="ECO:0007669"/>
    <property type="project" value="UniProtKB-SubCell"/>
</dbReference>
<dbReference type="GO" id="GO:0005739">
    <property type="term" value="C:mitochondrion"/>
    <property type="evidence" value="ECO:0007669"/>
    <property type="project" value="GOC"/>
</dbReference>
<dbReference type="GO" id="GO:0045259">
    <property type="term" value="C:proton-transporting ATP synthase complex"/>
    <property type="evidence" value="ECO:0007669"/>
    <property type="project" value="UniProtKB-KW"/>
</dbReference>
<dbReference type="GO" id="GO:0005524">
    <property type="term" value="F:ATP binding"/>
    <property type="evidence" value="ECO:0007669"/>
    <property type="project" value="UniProtKB-UniRule"/>
</dbReference>
<dbReference type="GO" id="GO:0016887">
    <property type="term" value="F:ATP hydrolysis activity"/>
    <property type="evidence" value="ECO:0007669"/>
    <property type="project" value="InterPro"/>
</dbReference>
<dbReference type="GO" id="GO:0046933">
    <property type="term" value="F:proton-transporting ATP synthase activity, rotational mechanism"/>
    <property type="evidence" value="ECO:0007669"/>
    <property type="project" value="UniProtKB-UniRule"/>
</dbReference>
<dbReference type="GO" id="GO:0042776">
    <property type="term" value="P:proton motive force-driven mitochondrial ATP synthesis"/>
    <property type="evidence" value="ECO:0007669"/>
    <property type="project" value="TreeGrafter"/>
</dbReference>
<dbReference type="CDD" id="cd18110">
    <property type="entry name" value="ATP-synt_F1_beta_C"/>
    <property type="match status" value="1"/>
</dbReference>
<dbReference type="CDD" id="cd18115">
    <property type="entry name" value="ATP-synt_F1_beta_N"/>
    <property type="match status" value="1"/>
</dbReference>
<dbReference type="CDD" id="cd01133">
    <property type="entry name" value="F1-ATPase_beta_CD"/>
    <property type="match status" value="1"/>
</dbReference>
<dbReference type="FunFam" id="1.10.1140.10:FF:000001">
    <property type="entry name" value="ATP synthase subunit beta"/>
    <property type="match status" value="1"/>
</dbReference>
<dbReference type="FunFam" id="3.40.50.12240:FF:000006">
    <property type="entry name" value="ATP synthase subunit beta"/>
    <property type="match status" value="1"/>
</dbReference>
<dbReference type="FunFam" id="3.40.50.300:FF:000004">
    <property type="entry name" value="ATP synthase subunit beta"/>
    <property type="match status" value="1"/>
</dbReference>
<dbReference type="FunFam" id="2.40.10.170:FF:000002">
    <property type="entry name" value="ATP synthase subunit beta, chloroplastic"/>
    <property type="match status" value="1"/>
</dbReference>
<dbReference type="Gene3D" id="2.40.10.170">
    <property type="match status" value="1"/>
</dbReference>
<dbReference type="Gene3D" id="1.10.1140.10">
    <property type="entry name" value="Bovine Mitochondrial F1-atpase, Atp Synthase Beta Chain, Chain D, domain 3"/>
    <property type="match status" value="1"/>
</dbReference>
<dbReference type="Gene3D" id="3.40.50.300">
    <property type="entry name" value="P-loop containing nucleotide triphosphate hydrolases"/>
    <property type="match status" value="1"/>
</dbReference>
<dbReference type="HAMAP" id="MF_01347">
    <property type="entry name" value="ATP_synth_beta_bact"/>
    <property type="match status" value="1"/>
</dbReference>
<dbReference type="InterPro" id="IPR003593">
    <property type="entry name" value="AAA+_ATPase"/>
</dbReference>
<dbReference type="InterPro" id="IPR055190">
    <property type="entry name" value="ATP-synt_VA_C"/>
</dbReference>
<dbReference type="InterPro" id="IPR005722">
    <property type="entry name" value="ATP_synth_F1_bsu"/>
</dbReference>
<dbReference type="InterPro" id="IPR020003">
    <property type="entry name" value="ATPase_a/bsu_AS"/>
</dbReference>
<dbReference type="InterPro" id="IPR050053">
    <property type="entry name" value="ATPase_alpha/beta_chains"/>
</dbReference>
<dbReference type="InterPro" id="IPR004100">
    <property type="entry name" value="ATPase_F1/V1/A1_a/bsu_N"/>
</dbReference>
<dbReference type="InterPro" id="IPR036121">
    <property type="entry name" value="ATPase_F1/V1/A1_a/bsu_N_sf"/>
</dbReference>
<dbReference type="InterPro" id="IPR000194">
    <property type="entry name" value="ATPase_F1/V1/A1_a/bsu_nucl-bd"/>
</dbReference>
<dbReference type="InterPro" id="IPR024034">
    <property type="entry name" value="ATPase_F1/V1_b/a_C"/>
</dbReference>
<dbReference type="InterPro" id="IPR027417">
    <property type="entry name" value="P-loop_NTPase"/>
</dbReference>
<dbReference type="NCBIfam" id="TIGR01039">
    <property type="entry name" value="atpD"/>
    <property type="match status" value="1"/>
</dbReference>
<dbReference type="PANTHER" id="PTHR15184">
    <property type="entry name" value="ATP SYNTHASE"/>
    <property type="match status" value="1"/>
</dbReference>
<dbReference type="PANTHER" id="PTHR15184:SF71">
    <property type="entry name" value="ATP SYNTHASE SUBUNIT BETA, MITOCHONDRIAL"/>
    <property type="match status" value="1"/>
</dbReference>
<dbReference type="Pfam" id="PF00006">
    <property type="entry name" value="ATP-synt_ab"/>
    <property type="match status" value="1"/>
</dbReference>
<dbReference type="Pfam" id="PF02874">
    <property type="entry name" value="ATP-synt_ab_N"/>
    <property type="match status" value="1"/>
</dbReference>
<dbReference type="Pfam" id="PF22919">
    <property type="entry name" value="ATP-synt_VA_C"/>
    <property type="match status" value="1"/>
</dbReference>
<dbReference type="SMART" id="SM00382">
    <property type="entry name" value="AAA"/>
    <property type="match status" value="1"/>
</dbReference>
<dbReference type="SUPFAM" id="SSF47917">
    <property type="entry name" value="C-terminal domain of alpha and beta subunits of F1 ATP synthase"/>
    <property type="match status" value="1"/>
</dbReference>
<dbReference type="SUPFAM" id="SSF50615">
    <property type="entry name" value="N-terminal domain of alpha and beta subunits of F1 ATP synthase"/>
    <property type="match status" value="1"/>
</dbReference>
<dbReference type="SUPFAM" id="SSF52540">
    <property type="entry name" value="P-loop containing nucleoside triphosphate hydrolases"/>
    <property type="match status" value="1"/>
</dbReference>
<dbReference type="PROSITE" id="PS00152">
    <property type="entry name" value="ATPASE_ALPHA_BETA"/>
    <property type="match status" value="1"/>
</dbReference>
<protein>
    <recommendedName>
        <fullName evidence="1">ATP synthase subunit beta, chloroplastic</fullName>
        <ecNumber evidence="1">7.1.2.2</ecNumber>
    </recommendedName>
    <alternativeName>
        <fullName evidence="1">ATP synthase F1 sector subunit beta</fullName>
    </alternativeName>
    <alternativeName>
        <fullName evidence="1">F-ATPase subunit beta</fullName>
    </alternativeName>
</protein>
<evidence type="ECO:0000255" key="1">
    <source>
        <dbReference type="HAMAP-Rule" id="MF_01347"/>
    </source>
</evidence>
<geneLocation type="chloroplast"/>
<feature type="chain" id="PRO_0000254440" description="ATP synthase subunit beta, chloroplastic">
    <location>
        <begin position="1"/>
        <end position="498"/>
    </location>
</feature>
<feature type="binding site" evidence="1">
    <location>
        <begin position="172"/>
        <end position="179"/>
    </location>
    <ligand>
        <name>ATP</name>
        <dbReference type="ChEBI" id="CHEBI:30616"/>
    </ligand>
</feature>
<sequence length="498" mass="53682">MRINPTTSGPAVSTLEEKNLGRIAQIIGPVLDVVFPPGKMPNIYNALVVKGRDTVGQQINVTCEVQQLLGNNRVRAVAMSATDGLTRGMEVIDTGAPLSVPVGGATLGRIFNVLGEPVDNLGPVDTRTTSPIHRSAPAFIQLDTKLSIFETGIKVVDLLAPYRRGGKIGLFGGAGVGKTVLIMELINNIAKAHGGVSVFGGVSERTREGNDLYMEMKESGVINEKNIAESKVALVYGQMNEPPGARMRVGLTALTMAEYFRDVNEQDVLLFIDNIFRFVQAGSEVSALLGRMPSAVGYQPTLSTEMGTLQERITSTKEGSITSIQAVYVPADDLTDPAPATTFAHLDATTVLSRGLAAKGIYPAVDPLDSTSTMLQPRIVGEEHYETAQRVKQTLQRYKELQDIIAILGLDELSEEDRLTVARARKIERFLSQPFFVAEVFTGSPGKYVGLAETIRGFQLILSGELDGLPEQAFYLVGNIDEATAKAMNLEGESNLKK</sequence>
<comment type="function">
    <text evidence="1">Produces ATP from ADP in the presence of a proton gradient across the membrane. The catalytic sites are hosted primarily by the beta subunits.</text>
</comment>
<comment type="catalytic activity">
    <reaction evidence="1">
        <text>ATP + H2O + 4 H(+)(in) = ADP + phosphate + 5 H(+)(out)</text>
        <dbReference type="Rhea" id="RHEA:57720"/>
        <dbReference type="ChEBI" id="CHEBI:15377"/>
        <dbReference type="ChEBI" id="CHEBI:15378"/>
        <dbReference type="ChEBI" id="CHEBI:30616"/>
        <dbReference type="ChEBI" id="CHEBI:43474"/>
        <dbReference type="ChEBI" id="CHEBI:456216"/>
        <dbReference type="EC" id="7.1.2.2"/>
    </reaction>
</comment>
<comment type="subunit">
    <text evidence="1">F-type ATPases have 2 components, CF(1) - the catalytic core - and CF(0) - the membrane proton channel. CF(1) has five subunits: alpha(3), beta(3), gamma(1), delta(1), epsilon(1). CF(0) has four main subunits: a(1), b(1), b'(1) and c(9-12).</text>
</comment>
<comment type="subcellular location">
    <subcellularLocation>
        <location evidence="1">Plastid</location>
        <location evidence="1">Chloroplast thylakoid membrane</location>
        <topology evidence="1">Peripheral membrane protein</topology>
    </subcellularLocation>
</comment>
<comment type="similarity">
    <text evidence="1">Belongs to the ATPase alpha/beta chains family.</text>
</comment>
<gene>
    <name evidence="1" type="primary">atpB</name>
</gene>
<reference key="1">
    <citation type="submission" date="2001-10" db="EMBL/GenBank/DDBJ databases">
        <title>Phylogenetic of Dioscoreales based on combined analysis of morphology and molecular data.</title>
        <authorList>
            <person name="Chase M.W."/>
        </authorList>
    </citation>
    <scope>NUCLEOTIDE SEQUENCE [GENOMIC DNA]</scope>
</reference>
<reference key="2">
    <citation type="submission" date="2001-11" db="EMBL/GenBank/DDBJ databases">
        <authorList>
            <person name="Caddick L.R."/>
        </authorList>
    </citation>
    <scope>NUCLEOTIDE SEQUENCE [GENOMIC DNA]</scope>
</reference>
<organism>
    <name type="scientific">Agapanthus africanus</name>
    <name type="common">Lily of the Nile</name>
    <name type="synonym">Crinum africanum</name>
    <dbReference type="NCBI Taxonomy" id="51501"/>
    <lineage>
        <taxon>Eukaryota</taxon>
        <taxon>Viridiplantae</taxon>
        <taxon>Streptophyta</taxon>
        <taxon>Embryophyta</taxon>
        <taxon>Tracheophyta</taxon>
        <taxon>Spermatophyta</taxon>
        <taxon>Magnoliopsida</taxon>
        <taxon>Liliopsida</taxon>
        <taxon>Asparagales</taxon>
        <taxon>Amaryllidaceae</taxon>
        <taxon>Agapanthoideae</taxon>
        <taxon>Agapanthus</taxon>
    </lineage>
</organism>